<gene>
    <name evidence="1" type="primary">lpxC</name>
    <name type="ordered locus">Rmag_0444</name>
</gene>
<protein>
    <recommendedName>
        <fullName evidence="1">UDP-3-O-acyl-N-acetylglucosamine deacetylase</fullName>
        <shortName evidence="1">UDP-3-O-acyl-GlcNAc deacetylase</shortName>
        <ecNumber evidence="1">3.5.1.108</ecNumber>
    </recommendedName>
    <alternativeName>
        <fullName evidence="1">UDP-3-O-[R-3-hydroxymyristoyl]-N-acetylglucosamine deacetylase</fullName>
    </alternativeName>
</protein>
<name>LPXC_RUTMC</name>
<reference key="1">
    <citation type="journal article" date="2007" name="Science">
        <title>The Calyptogena magnifica chemoautotrophic symbiont genome.</title>
        <authorList>
            <person name="Newton I.L.G."/>
            <person name="Woyke T."/>
            <person name="Auchtung T.A."/>
            <person name="Dilly G.F."/>
            <person name="Dutton R.J."/>
            <person name="Fisher M.C."/>
            <person name="Fontanez K.M."/>
            <person name="Lau E."/>
            <person name="Stewart F.J."/>
            <person name="Richardson P.M."/>
            <person name="Barry K.W."/>
            <person name="Saunders E."/>
            <person name="Detter J.C."/>
            <person name="Wu D."/>
            <person name="Eisen J.A."/>
            <person name="Cavanaugh C.M."/>
        </authorList>
    </citation>
    <scope>NUCLEOTIDE SEQUENCE [LARGE SCALE GENOMIC DNA]</scope>
</reference>
<evidence type="ECO:0000255" key="1">
    <source>
        <dbReference type="HAMAP-Rule" id="MF_00388"/>
    </source>
</evidence>
<comment type="function">
    <text evidence="1">Catalyzes the hydrolysis of UDP-3-O-myristoyl-N-acetylglucosamine to form UDP-3-O-myristoylglucosamine and acetate, the committed step in lipid A biosynthesis.</text>
</comment>
<comment type="catalytic activity">
    <reaction evidence="1">
        <text>a UDP-3-O-[(3R)-3-hydroxyacyl]-N-acetyl-alpha-D-glucosamine + H2O = a UDP-3-O-[(3R)-3-hydroxyacyl]-alpha-D-glucosamine + acetate</text>
        <dbReference type="Rhea" id="RHEA:67816"/>
        <dbReference type="ChEBI" id="CHEBI:15377"/>
        <dbReference type="ChEBI" id="CHEBI:30089"/>
        <dbReference type="ChEBI" id="CHEBI:137740"/>
        <dbReference type="ChEBI" id="CHEBI:173225"/>
        <dbReference type="EC" id="3.5.1.108"/>
    </reaction>
</comment>
<comment type="cofactor">
    <cofactor evidence="1">
        <name>Zn(2+)</name>
        <dbReference type="ChEBI" id="CHEBI:29105"/>
    </cofactor>
</comment>
<comment type="pathway">
    <text evidence="1">Glycolipid biosynthesis; lipid IV(A) biosynthesis; lipid IV(A) from (3R)-3-hydroxytetradecanoyl-[acyl-carrier-protein] and UDP-N-acetyl-alpha-D-glucosamine: step 2/6.</text>
</comment>
<comment type="similarity">
    <text evidence="1">Belongs to the LpxC family.</text>
</comment>
<keyword id="KW-0378">Hydrolase</keyword>
<keyword id="KW-0441">Lipid A biosynthesis</keyword>
<keyword id="KW-0444">Lipid biosynthesis</keyword>
<keyword id="KW-0443">Lipid metabolism</keyword>
<keyword id="KW-0479">Metal-binding</keyword>
<keyword id="KW-0862">Zinc</keyword>
<feature type="chain" id="PRO_1000122812" description="UDP-3-O-acyl-N-acetylglucosamine deacetylase">
    <location>
        <begin position="1"/>
        <end position="303"/>
    </location>
</feature>
<feature type="active site" description="Proton donor" evidence="1">
    <location>
        <position position="263"/>
    </location>
</feature>
<feature type="binding site" evidence="1">
    <location>
        <position position="77"/>
    </location>
    <ligand>
        <name>Zn(2+)</name>
        <dbReference type="ChEBI" id="CHEBI:29105"/>
    </ligand>
</feature>
<feature type="binding site" evidence="1">
    <location>
        <position position="236"/>
    </location>
    <ligand>
        <name>Zn(2+)</name>
        <dbReference type="ChEBI" id="CHEBI:29105"/>
    </ligand>
</feature>
<feature type="binding site" evidence="1">
    <location>
        <position position="240"/>
    </location>
    <ligand>
        <name>Zn(2+)</name>
        <dbReference type="ChEBI" id="CHEBI:29105"/>
    </ligand>
</feature>
<sequence length="303" mass="34042">MIKQRTIKKEVKARGVGIHSGSVVNMTLIPAKEDHGVVFRRMDVGGKLVRAHSAFVNEVVLSTGLENQGVKVSTVEHLMSTFSALGIDNVLVELDSFEVPIMDGSSAPFIFLVQSAGIKEQDAYKKFFVIKDTIRVENGDSWAQVSKYEGFKVSLEIDFDHKKVKESGQKLSINFSKQCYLKEISRARTFGYMKDVEMMQRQNLALGASMDNAIALSDDDVLNEDGMRYQNEFVKHKILDIVGDLYLLGSNLIGHYEGYKTGHLLNNQLLSVILAKPDTWSIETFEEEGSPIQFYSEDWKNSL</sequence>
<organism>
    <name type="scientific">Ruthia magnifica subsp. Calyptogena magnifica</name>
    <dbReference type="NCBI Taxonomy" id="413404"/>
    <lineage>
        <taxon>Bacteria</taxon>
        <taxon>Pseudomonadati</taxon>
        <taxon>Pseudomonadota</taxon>
        <taxon>Gammaproteobacteria</taxon>
        <taxon>Candidatus Pseudothioglobaceae</taxon>
        <taxon>Candidatus Ruthturnera</taxon>
    </lineage>
</organism>
<accession>A1AW96</accession>
<dbReference type="EC" id="3.5.1.108" evidence="1"/>
<dbReference type="EMBL" id="CP000488">
    <property type="protein sequence ID" value="ABL02203.1"/>
    <property type="molecule type" value="Genomic_DNA"/>
</dbReference>
<dbReference type="RefSeq" id="WP_011737828.1">
    <property type="nucleotide sequence ID" value="NC_008610.1"/>
</dbReference>
<dbReference type="SMR" id="A1AW96"/>
<dbReference type="STRING" id="413404.Rmag_0444"/>
<dbReference type="KEGG" id="rma:Rmag_0444"/>
<dbReference type="eggNOG" id="COG0774">
    <property type="taxonomic scope" value="Bacteria"/>
</dbReference>
<dbReference type="HOGENOM" id="CLU_046528_1_0_6"/>
<dbReference type="OrthoDB" id="9802746at2"/>
<dbReference type="UniPathway" id="UPA00359">
    <property type="reaction ID" value="UER00478"/>
</dbReference>
<dbReference type="Proteomes" id="UP000002587">
    <property type="component" value="Chromosome"/>
</dbReference>
<dbReference type="GO" id="GO:0016020">
    <property type="term" value="C:membrane"/>
    <property type="evidence" value="ECO:0007669"/>
    <property type="project" value="GOC"/>
</dbReference>
<dbReference type="GO" id="GO:0046872">
    <property type="term" value="F:metal ion binding"/>
    <property type="evidence" value="ECO:0007669"/>
    <property type="project" value="UniProtKB-KW"/>
</dbReference>
<dbReference type="GO" id="GO:0103117">
    <property type="term" value="F:UDP-3-O-acyl-N-acetylglucosamine deacetylase activity"/>
    <property type="evidence" value="ECO:0007669"/>
    <property type="project" value="UniProtKB-UniRule"/>
</dbReference>
<dbReference type="GO" id="GO:0009245">
    <property type="term" value="P:lipid A biosynthetic process"/>
    <property type="evidence" value="ECO:0007669"/>
    <property type="project" value="UniProtKB-UniRule"/>
</dbReference>
<dbReference type="Gene3D" id="3.30.230.20">
    <property type="entry name" value="lpxc deacetylase, domain 1"/>
    <property type="match status" value="1"/>
</dbReference>
<dbReference type="Gene3D" id="3.30.1700.10">
    <property type="entry name" value="lpxc deacetylase, domain 2"/>
    <property type="match status" value="1"/>
</dbReference>
<dbReference type="HAMAP" id="MF_00388">
    <property type="entry name" value="LpxC"/>
    <property type="match status" value="1"/>
</dbReference>
<dbReference type="InterPro" id="IPR020568">
    <property type="entry name" value="Ribosomal_Su5_D2-typ_SF"/>
</dbReference>
<dbReference type="InterPro" id="IPR004463">
    <property type="entry name" value="UDP-acyl_GlcNac_deAcase"/>
</dbReference>
<dbReference type="InterPro" id="IPR011334">
    <property type="entry name" value="UDP-acyl_GlcNac_deAcase_C"/>
</dbReference>
<dbReference type="InterPro" id="IPR015870">
    <property type="entry name" value="UDP-acyl_N-AcGlcN_deAcase_N"/>
</dbReference>
<dbReference type="NCBIfam" id="TIGR00325">
    <property type="entry name" value="lpxC"/>
    <property type="match status" value="1"/>
</dbReference>
<dbReference type="PANTHER" id="PTHR33694">
    <property type="entry name" value="UDP-3-O-ACYL-N-ACETYLGLUCOSAMINE DEACETYLASE 1, MITOCHONDRIAL-RELATED"/>
    <property type="match status" value="1"/>
</dbReference>
<dbReference type="PANTHER" id="PTHR33694:SF1">
    <property type="entry name" value="UDP-3-O-ACYL-N-ACETYLGLUCOSAMINE DEACETYLASE 1, MITOCHONDRIAL-RELATED"/>
    <property type="match status" value="1"/>
</dbReference>
<dbReference type="Pfam" id="PF03331">
    <property type="entry name" value="LpxC"/>
    <property type="match status" value="1"/>
</dbReference>
<dbReference type="SUPFAM" id="SSF54211">
    <property type="entry name" value="Ribosomal protein S5 domain 2-like"/>
    <property type="match status" value="2"/>
</dbReference>
<proteinExistence type="inferred from homology"/>